<proteinExistence type="inferred from homology"/>
<organism>
    <name type="scientific">Morus indica</name>
    <name type="common">Mulberry</name>
    <dbReference type="NCBI Taxonomy" id="248361"/>
    <lineage>
        <taxon>Eukaryota</taxon>
        <taxon>Viridiplantae</taxon>
        <taxon>Streptophyta</taxon>
        <taxon>Embryophyta</taxon>
        <taxon>Tracheophyta</taxon>
        <taxon>Spermatophyta</taxon>
        <taxon>Magnoliopsida</taxon>
        <taxon>eudicotyledons</taxon>
        <taxon>Gunneridae</taxon>
        <taxon>Pentapetalae</taxon>
        <taxon>rosids</taxon>
        <taxon>fabids</taxon>
        <taxon>Rosales</taxon>
        <taxon>Moraceae</taxon>
        <taxon>Moreae</taxon>
        <taxon>Morus</taxon>
    </lineage>
</organism>
<keyword id="KW-0150">Chloroplast</keyword>
<keyword id="KW-0472">Membrane</keyword>
<keyword id="KW-0602">Photosynthesis</keyword>
<keyword id="KW-0604">Photosystem II</keyword>
<keyword id="KW-0934">Plastid</keyword>
<keyword id="KW-0674">Reaction center</keyword>
<keyword id="KW-0793">Thylakoid</keyword>
<keyword id="KW-0812">Transmembrane</keyword>
<keyword id="KW-1133">Transmembrane helix</keyword>
<name>PSBJ_MORIN</name>
<gene>
    <name evidence="1" type="primary">psbJ</name>
    <name type="ordered locus">MoinCp035</name>
</gene>
<dbReference type="EMBL" id="DQ226511">
    <property type="protein sequence ID" value="ABB20970.1"/>
    <property type="molecule type" value="Genomic_DNA"/>
</dbReference>
<dbReference type="RefSeq" id="YP_762275.1">
    <property type="nucleotide sequence ID" value="NC_008359.1"/>
</dbReference>
<dbReference type="SMR" id="Q09X03"/>
<dbReference type="GeneID" id="4290678"/>
<dbReference type="GO" id="GO:0009535">
    <property type="term" value="C:chloroplast thylakoid membrane"/>
    <property type="evidence" value="ECO:0007669"/>
    <property type="project" value="UniProtKB-SubCell"/>
</dbReference>
<dbReference type="GO" id="GO:0009539">
    <property type="term" value="C:photosystem II reaction center"/>
    <property type="evidence" value="ECO:0007669"/>
    <property type="project" value="InterPro"/>
</dbReference>
<dbReference type="GO" id="GO:0015979">
    <property type="term" value="P:photosynthesis"/>
    <property type="evidence" value="ECO:0007669"/>
    <property type="project" value="UniProtKB-UniRule"/>
</dbReference>
<dbReference type="Gene3D" id="6.10.250.2070">
    <property type="match status" value="1"/>
</dbReference>
<dbReference type="HAMAP" id="MF_01305">
    <property type="entry name" value="PSII_PsbJ"/>
    <property type="match status" value="1"/>
</dbReference>
<dbReference type="InterPro" id="IPR002682">
    <property type="entry name" value="PSII_PsbJ"/>
</dbReference>
<dbReference type="InterPro" id="IPR037267">
    <property type="entry name" value="PSII_PsbJ_sf"/>
</dbReference>
<dbReference type="NCBIfam" id="NF002722">
    <property type="entry name" value="PRK02565.1"/>
    <property type="match status" value="1"/>
</dbReference>
<dbReference type="PANTHER" id="PTHR34812">
    <property type="entry name" value="PHOTOSYSTEM II REACTION CENTER PROTEIN J"/>
    <property type="match status" value="1"/>
</dbReference>
<dbReference type="PANTHER" id="PTHR34812:SF3">
    <property type="entry name" value="PHOTOSYSTEM II REACTION CENTER PROTEIN J"/>
    <property type="match status" value="1"/>
</dbReference>
<dbReference type="Pfam" id="PF01788">
    <property type="entry name" value="PsbJ"/>
    <property type="match status" value="1"/>
</dbReference>
<dbReference type="SUPFAM" id="SSF161021">
    <property type="entry name" value="Photosystem II reaction center protein J, PsbJ"/>
    <property type="match status" value="1"/>
</dbReference>
<sequence length="40" mass="4161">MADTTGRIPLWIIGTVTGIIVIGLIGIFFYGSYSGLGSSL</sequence>
<comment type="function">
    <text evidence="1">One of the components of the core complex of photosystem II (PSII). PSII is a light-driven water:plastoquinone oxidoreductase that uses light energy to abstract electrons from H(2)O, generating O(2) and a proton gradient subsequently used for ATP formation. It consists of a core antenna complex that captures photons, and an electron transfer chain that converts photonic excitation into a charge separation.</text>
</comment>
<comment type="subunit">
    <text evidence="1">PSII is composed of 1 copy each of membrane proteins PsbA, PsbB, PsbC, PsbD, PsbE, PsbF, PsbH, PsbI, PsbJ, PsbK, PsbL, PsbM, PsbT, PsbX, PsbY, PsbZ, Psb30/Ycf12, at least 3 peripheral proteins of the oxygen-evolving complex and a large number of cofactors. It forms dimeric complexes.</text>
</comment>
<comment type="subcellular location">
    <subcellularLocation>
        <location evidence="1">Plastid</location>
        <location evidence="1">Chloroplast thylakoid membrane</location>
        <topology evidence="1">Single-pass membrane protein</topology>
    </subcellularLocation>
</comment>
<comment type="similarity">
    <text evidence="1">Belongs to the PsbJ family.</text>
</comment>
<reference key="1">
    <citation type="submission" date="2005-09" db="EMBL/GenBank/DDBJ databases">
        <title>The chloroplast genome of mulberry: structural features and comparative analysis.</title>
        <authorList>
            <person name="Ravi V."/>
            <person name="Khurana J.P."/>
            <person name="Tyagi A.K."/>
            <person name="Khurana P."/>
        </authorList>
    </citation>
    <scope>NUCLEOTIDE SEQUENCE [LARGE SCALE GENOMIC DNA]</scope>
    <source>
        <strain>cv. K2</strain>
    </source>
</reference>
<accession>Q09X03</accession>
<evidence type="ECO:0000255" key="1">
    <source>
        <dbReference type="HAMAP-Rule" id="MF_01305"/>
    </source>
</evidence>
<feature type="chain" id="PRO_0000276102" description="Photosystem II reaction center protein J">
    <location>
        <begin position="1"/>
        <end position="40"/>
    </location>
</feature>
<feature type="transmembrane region" description="Helical" evidence="1">
    <location>
        <begin position="8"/>
        <end position="28"/>
    </location>
</feature>
<protein>
    <recommendedName>
        <fullName evidence="1">Photosystem II reaction center protein J</fullName>
        <shortName evidence="1">PSII-J</shortName>
    </recommendedName>
</protein>
<geneLocation type="chloroplast"/>